<feature type="chain" id="PRO_1000201399" description="Elongation factor Tu">
    <location>
        <begin position="1"/>
        <end position="409"/>
    </location>
</feature>
<feature type="domain" description="tr-type G">
    <location>
        <begin position="10"/>
        <end position="214"/>
    </location>
</feature>
<feature type="region of interest" description="G1" evidence="1">
    <location>
        <begin position="19"/>
        <end position="26"/>
    </location>
</feature>
<feature type="region of interest" description="G2" evidence="1">
    <location>
        <begin position="60"/>
        <end position="64"/>
    </location>
</feature>
<feature type="region of interest" description="G3" evidence="1">
    <location>
        <begin position="81"/>
        <end position="84"/>
    </location>
</feature>
<feature type="region of interest" description="G4" evidence="1">
    <location>
        <begin position="136"/>
        <end position="139"/>
    </location>
</feature>
<feature type="region of interest" description="G5" evidence="1">
    <location>
        <begin position="174"/>
        <end position="176"/>
    </location>
</feature>
<feature type="binding site" evidence="2">
    <location>
        <begin position="19"/>
        <end position="26"/>
    </location>
    <ligand>
        <name>GTP</name>
        <dbReference type="ChEBI" id="CHEBI:37565"/>
    </ligand>
</feature>
<feature type="binding site" evidence="2">
    <location>
        <position position="26"/>
    </location>
    <ligand>
        <name>Mg(2+)</name>
        <dbReference type="ChEBI" id="CHEBI:18420"/>
    </ligand>
</feature>
<feature type="binding site" evidence="2">
    <location>
        <begin position="81"/>
        <end position="85"/>
    </location>
    <ligand>
        <name>GTP</name>
        <dbReference type="ChEBI" id="CHEBI:37565"/>
    </ligand>
</feature>
<feature type="binding site" evidence="2">
    <location>
        <begin position="136"/>
        <end position="139"/>
    </location>
    <ligand>
        <name>GTP</name>
        <dbReference type="ChEBI" id="CHEBI:37565"/>
    </ligand>
</feature>
<gene>
    <name evidence="2" type="primary">tuf</name>
    <name type="ordered locus">Cyan7425_0708</name>
</gene>
<dbReference type="EC" id="3.6.5.3" evidence="2"/>
<dbReference type="EMBL" id="CP001344">
    <property type="protein sequence ID" value="ACL43095.1"/>
    <property type="molecule type" value="Genomic_DNA"/>
</dbReference>
<dbReference type="SMR" id="B8HVR7"/>
<dbReference type="STRING" id="395961.Cyan7425_0708"/>
<dbReference type="KEGG" id="cyn:Cyan7425_0708"/>
<dbReference type="eggNOG" id="COG0050">
    <property type="taxonomic scope" value="Bacteria"/>
</dbReference>
<dbReference type="HOGENOM" id="CLU_007265_0_1_3"/>
<dbReference type="OrthoDB" id="9804504at2"/>
<dbReference type="GO" id="GO:0005829">
    <property type="term" value="C:cytosol"/>
    <property type="evidence" value="ECO:0007669"/>
    <property type="project" value="TreeGrafter"/>
</dbReference>
<dbReference type="GO" id="GO:0005525">
    <property type="term" value="F:GTP binding"/>
    <property type="evidence" value="ECO:0007669"/>
    <property type="project" value="UniProtKB-UniRule"/>
</dbReference>
<dbReference type="GO" id="GO:0003924">
    <property type="term" value="F:GTPase activity"/>
    <property type="evidence" value="ECO:0007669"/>
    <property type="project" value="InterPro"/>
</dbReference>
<dbReference type="GO" id="GO:0003746">
    <property type="term" value="F:translation elongation factor activity"/>
    <property type="evidence" value="ECO:0007669"/>
    <property type="project" value="UniProtKB-UniRule"/>
</dbReference>
<dbReference type="CDD" id="cd01884">
    <property type="entry name" value="EF_Tu"/>
    <property type="match status" value="1"/>
</dbReference>
<dbReference type="CDD" id="cd03697">
    <property type="entry name" value="EFTU_II"/>
    <property type="match status" value="1"/>
</dbReference>
<dbReference type="CDD" id="cd03707">
    <property type="entry name" value="EFTU_III"/>
    <property type="match status" value="1"/>
</dbReference>
<dbReference type="FunFam" id="2.40.30.10:FF:000001">
    <property type="entry name" value="Elongation factor Tu"/>
    <property type="match status" value="1"/>
</dbReference>
<dbReference type="FunFam" id="2.40.30.10:FF:000046">
    <property type="entry name" value="Elongation factor Tu"/>
    <property type="match status" value="1"/>
</dbReference>
<dbReference type="FunFam" id="3.40.50.300:FF:000003">
    <property type="entry name" value="Elongation factor Tu"/>
    <property type="match status" value="1"/>
</dbReference>
<dbReference type="Gene3D" id="3.40.50.300">
    <property type="entry name" value="P-loop containing nucleotide triphosphate hydrolases"/>
    <property type="match status" value="1"/>
</dbReference>
<dbReference type="Gene3D" id="2.40.30.10">
    <property type="entry name" value="Translation factors"/>
    <property type="match status" value="2"/>
</dbReference>
<dbReference type="HAMAP" id="MF_00118_B">
    <property type="entry name" value="EF_Tu_B"/>
    <property type="match status" value="1"/>
</dbReference>
<dbReference type="InterPro" id="IPR041709">
    <property type="entry name" value="EF-Tu_GTP-bd"/>
</dbReference>
<dbReference type="InterPro" id="IPR050055">
    <property type="entry name" value="EF-Tu_GTPase"/>
</dbReference>
<dbReference type="InterPro" id="IPR004161">
    <property type="entry name" value="EFTu-like_2"/>
</dbReference>
<dbReference type="InterPro" id="IPR033720">
    <property type="entry name" value="EFTU_2"/>
</dbReference>
<dbReference type="InterPro" id="IPR031157">
    <property type="entry name" value="G_TR_CS"/>
</dbReference>
<dbReference type="InterPro" id="IPR027417">
    <property type="entry name" value="P-loop_NTPase"/>
</dbReference>
<dbReference type="InterPro" id="IPR005225">
    <property type="entry name" value="Small_GTP-bd"/>
</dbReference>
<dbReference type="InterPro" id="IPR000795">
    <property type="entry name" value="T_Tr_GTP-bd_dom"/>
</dbReference>
<dbReference type="InterPro" id="IPR009000">
    <property type="entry name" value="Transl_B-barrel_sf"/>
</dbReference>
<dbReference type="InterPro" id="IPR009001">
    <property type="entry name" value="Transl_elong_EF1A/Init_IF2_C"/>
</dbReference>
<dbReference type="InterPro" id="IPR004541">
    <property type="entry name" value="Transl_elong_EFTu/EF1A_bac/org"/>
</dbReference>
<dbReference type="InterPro" id="IPR004160">
    <property type="entry name" value="Transl_elong_EFTu/EF1A_C"/>
</dbReference>
<dbReference type="NCBIfam" id="TIGR00485">
    <property type="entry name" value="EF-Tu"/>
    <property type="match status" value="1"/>
</dbReference>
<dbReference type="NCBIfam" id="NF000766">
    <property type="entry name" value="PRK00049.1"/>
    <property type="match status" value="1"/>
</dbReference>
<dbReference type="NCBIfam" id="NF009372">
    <property type="entry name" value="PRK12735.1"/>
    <property type="match status" value="1"/>
</dbReference>
<dbReference type="NCBIfam" id="NF009373">
    <property type="entry name" value="PRK12736.1"/>
    <property type="match status" value="1"/>
</dbReference>
<dbReference type="NCBIfam" id="TIGR00231">
    <property type="entry name" value="small_GTP"/>
    <property type="match status" value="1"/>
</dbReference>
<dbReference type="PANTHER" id="PTHR43721:SF22">
    <property type="entry name" value="ELONGATION FACTOR TU, MITOCHONDRIAL"/>
    <property type="match status" value="1"/>
</dbReference>
<dbReference type="PANTHER" id="PTHR43721">
    <property type="entry name" value="ELONGATION FACTOR TU-RELATED"/>
    <property type="match status" value="1"/>
</dbReference>
<dbReference type="Pfam" id="PF00009">
    <property type="entry name" value="GTP_EFTU"/>
    <property type="match status" value="1"/>
</dbReference>
<dbReference type="Pfam" id="PF03144">
    <property type="entry name" value="GTP_EFTU_D2"/>
    <property type="match status" value="1"/>
</dbReference>
<dbReference type="Pfam" id="PF03143">
    <property type="entry name" value="GTP_EFTU_D3"/>
    <property type="match status" value="1"/>
</dbReference>
<dbReference type="PRINTS" id="PR00315">
    <property type="entry name" value="ELONGATNFCT"/>
</dbReference>
<dbReference type="SUPFAM" id="SSF50465">
    <property type="entry name" value="EF-Tu/eEF-1alpha/eIF2-gamma C-terminal domain"/>
    <property type="match status" value="1"/>
</dbReference>
<dbReference type="SUPFAM" id="SSF52540">
    <property type="entry name" value="P-loop containing nucleoside triphosphate hydrolases"/>
    <property type="match status" value="1"/>
</dbReference>
<dbReference type="SUPFAM" id="SSF50447">
    <property type="entry name" value="Translation proteins"/>
    <property type="match status" value="1"/>
</dbReference>
<dbReference type="PROSITE" id="PS00301">
    <property type="entry name" value="G_TR_1"/>
    <property type="match status" value="1"/>
</dbReference>
<dbReference type="PROSITE" id="PS51722">
    <property type="entry name" value="G_TR_2"/>
    <property type="match status" value="1"/>
</dbReference>
<reference key="1">
    <citation type="journal article" date="2011" name="MBio">
        <title>Novel metabolic attributes of the genus Cyanothece, comprising a group of unicellular nitrogen-fixing Cyanobacteria.</title>
        <authorList>
            <person name="Bandyopadhyay A."/>
            <person name="Elvitigala T."/>
            <person name="Welsh E."/>
            <person name="Stockel J."/>
            <person name="Liberton M."/>
            <person name="Min H."/>
            <person name="Sherman L.A."/>
            <person name="Pakrasi H.B."/>
        </authorList>
    </citation>
    <scope>NUCLEOTIDE SEQUENCE [LARGE SCALE GENOMIC DNA]</scope>
    <source>
        <strain>PCC 7425 / ATCC 29141</strain>
    </source>
</reference>
<organism>
    <name type="scientific">Cyanothece sp. (strain PCC 7425 / ATCC 29141)</name>
    <dbReference type="NCBI Taxonomy" id="395961"/>
    <lineage>
        <taxon>Bacteria</taxon>
        <taxon>Bacillati</taxon>
        <taxon>Cyanobacteriota</taxon>
        <taxon>Cyanophyceae</taxon>
        <taxon>Gomontiellales</taxon>
        <taxon>Cyanothecaceae</taxon>
        <taxon>Cyanothece</taxon>
    </lineage>
</organism>
<accession>B8HVR7</accession>
<proteinExistence type="inferred from homology"/>
<evidence type="ECO:0000250" key="1"/>
<evidence type="ECO:0000255" key="2">
    <source>
        <dbReference type="HAMAP-Rule" id="MF_00118"/>
    </source>
</evidence>
<comment type="function">
    <text evidence="2">GTP hydrolase that promotes the GTP-dependent binding of aminoacyl-tRNA to the A-site of ribosomes during protein biosynthesis.</text>
</comment>
<comment type="catalytic activity">
    <reaction evidence="2">
        <text>GTP + H2O = GDP + phosphate + H(+)</text>
        <dbReference type="Rhea" id="RHEA:19669"/>
        <dbReference type="ChEBI" id="CHEBI:15377"/>
        <dbReference type="ChEBI" id="CHEBI:15378"/>
        <dbReference type="ChEBI" id="CHEBI:37565"/>
        <dbReference type="ChEBI" id="CHEBI:43474"/>
        <dbReference type="ChEBI" id="CHEBI:58189"/>
        <dbReference type="EC" id="3.6.5.3"/>
    </reaction>
    <physiologicalReaction direction="left-to-right" evidence="2">
        <dbReference type="Rhea" id="RHEA:19670"/>
    </physiologicalReaction>
</comment>
<comment type="subunit">
    <text evidence="2">Monomer.</text>
</comment>
<comment type="subcellular location">
    <subcellularLocation>
        <location evidence="2">Cytoplasm</location>
    </subcellularLocation>
</comment>
<comment type="similarity">
    <text evidence="2">Belongs to the TRAFAC class translation factor GTPase superfamily. Classic translation factor GTPase family. EF-Tu/EF-1A subfamily.</text>
</comment>
<protein>
    <recommendedName>
        <fullName evidence="2">Elongation factor Tu</fullName>
        <shortName evidence="2">EF-Tu</shortName>
        <ecNumber evidence="2">3.6.5.3</ecNumber>
    </recommendedName>
</protein>
<name>EFTU_CYAP4</name>
<sequence length="409" mass="44753">MARAKFERNKPHVNIGTIGHVDHGKTTLTAAITMTLAALGQAAARKYDEIDAAPEEKARGITINTAHVEYETTQRHYAHVDCPGHADYVKNMITGAAQMDGAILVVAATDGAMPQTKEHILLAKQVGVPSIVVFLNKVDQLDDEELLELVELELRELLTSYDFDGDNIPIIRGSGLMALEAMTGNPKTQRGDNEWVDKIYELMDAVDSYIPTPERDVDKPFLMAVEDVFSITGRGTVATGRIERGKVKINDTVEVVGIRETRTTTVTGIEMFKKSLDEGMAGDNAGLLLRGLKKEDIERGMVLAKPGSITPHTEFEGEVYVLTEKEGGRKTPFFAGYRPQFYVRTTDVTGTIKSFTADDGSNAEMVMPGDRIKMNVELINPIAIEQGMRFAIREGGRTIGAGVVSKIVK</sequence>
<keyword id="KW-0963">Cytoplasm</keyword>
<keyword id="KW-0251">Elongation factor</keyword>
<keyword id="KW-0342">GTP-binding</keyword>
<keyword id="KW-0378">Hydrolase</keyword>
<keyword id="KW-0460">Magnesium</keyword>
<keyword id="KW-0479">Metal-binding</keyword>
<keyword id="KW-0547">Nucleotide-binding</keyword>
<keyword id="KW-0648">Protein biosynthesis</keyword>